<evidence type="ECO:0000255" key="1">
    <source>
        <dbReference type="HAMAP-Rule" id="MF_00171"/>
    </source>
</evidence>
<dbReference type="EC" id="5.4.99.12" evidence="1"/>
<dbReference type="EMBL" id="CP000319">
    <property type="protein sequence ID" value="ABE64421.1"/>
    <property type="molecule type" value="Genomic_DNA"/>
</dbReference>
<dbReference type="RefSeq" id="WP_011512060.1">
    <property type="nucleotide sequence ID" value="NC_007964.1"/>
</dbReference>
<dbReference type="SMR" id="Q1QH76"/>
<dbReference type="STRING" id="323097.Nham_3695"/>
<dbReference type="KEGG" id="nha:Nham_3695"/>
<dbReference type="eggNOG" id="COG0101">
    <property type="taxonomic scope" value="Bacteria"/>
</dbReference>
<dbReference type="HOGENOM" id="CLU_014673_0_2_5"/>
<dbReference type="OrthoDB" id="9811823at2"/>
<dbReference type="Proteomes" id="UP000001953">
    <property type="component" value="Chromosome"/>
</dbReference>
<dbReference type="GO" id="GO:0003723">
    <property type="term" value="F:RNA binding"/>
    <property type="evidence" value="ECO:0007669"/>
    <property type="project" value="InterPro"/>
</dbReference>
<dbReference type="GO" id="GO:0160147">
    <property type="term" value="F:tRNA pseudouridine(38-40) synthase activity"/>
    <property type="evidence" value="ECO:0007669"/>
    <property type="project" value="UniProtKB-EC"/>
</dbReference>
<dbReference type="GO" id="GO:0031119">
    <property type="term" value="P:tRNA pseudouridine synthesis"/>
    <property type="evidence" value="ECO:0007669"/>
    <property type="project" value="UniProtKB-UniRule"/>
</dbReference>
<dbReference type="CDD" id="cd02570">
    <property type="entry name" value="PseudoU_synth_EcTruA"/>
    <property type="match status" value="1"/>
</dbReference>
<dbReference type="FunFam" id="3.30.70.580:FF:000001">
    <property type="entry name" value="tRNA pseudouridine synthase A"/>
    <property type="match status" value="1"/>
</dbReference>
<dbReference type="Gene3D" id="3.30.70.660">
    <property type="entry name" value="Pseudouridine synthase I, catalytic domain, C-terminal subdomain"/>
    <property type="match status" value="1"/>
</dbReference>
<dbReference type="Gene3D" id="3.30.70.580">
    <property type="entry name" value="Pseudouridine synthase I, catalytic domain, N-terminal subdomain"/>
    <property type="match status" value="1"/>
</dbReference>
<dbReference type="HAMAP" id="MF_00171">
    <property type="entry name" value="TruA"/>
    <property type="match status" value="1"/>
</dbReference>
<dbReference type="InterPro" id="IPR020103">
    <property type="entry name" value="PsdUridine_synth_cat_dom_sf"/>
</dbReference>
<dbReference type="InterPro" id="IPR001406">
    <property type="entry name" value="PsdUridine_synth_TruA"/>
</dbReference>
<dbReference type="InterPro" id="IPR020097">
    <property type="entry name" value="PsdUridine_synth_TruA_a/b_dom"/>
</dbReference>
<dbReference type="InterPro" id="IPR020095">
    <property type="entry name" value="PsdUridine_synth_TruA_C"/>
</dbReference>
<dbReference type="InterPro" id="IPR020094">
    <property type="entry name" value="TruA/RsuA/RluB/E/F_N"/>
</dbReference>
<dbReference type="NCBIfam" id="TIGR00071">
    <property type="entry name" value="hisT_truA"/>
    <property type="match status" value="1"/>
</dbReference>
<dbReference type="PANTHER" id="PTHR11142">
    <property type="entry name" value="PSEUDOURIDYLATE SYNTHASE"/>
    <property type="match status" value="1"/>
</dbReference>
<dbReference type="PANTHER" id="PTHR11142:SF0">
    <property type="entry name" value="TRNA PSEUDOURIDINE SYNTHASE-LIKE 1"/>
    <property type="match status" value="1"/>
</dbReference>
<dbReference type="Pfam" id="PF01416">
    <property type="entry name" value="PseudoU_synth_1"/>
    <property type="match status" value="2"/>
</dbReference>
<dbReference type="PIRSF" id="PIRSF001430">
    <property type="entry name" value="tRNA_psdUrid_synth"/>
    <property type="match status" value="1"/>
</dbReference>
<dbReference type="SUPFAM" id="SSF55120">
    <property type="entry name" value="Pseudouridine synthase"/>
    <property type="match status" value="1"/>
</dbReference>
<protein>
    <recommendedName>
        <fullName evidence="1">tRNA pseudouridine synthase A</fullName>
        <ecNumber evidence="1">5.4.99.12</ecNumber>
    </recommendedName>
    <alternativeName>
        <fullName evidence="1">tRNA pseudouridine(38-40) synthase</fullName>
    </alternativeName>
    <alternativeName>
        <fullName evidence="1">tRNA pseudouridylate synthase I</fullName>
    </alternativeName>
    <alternativeName>
        <fullName evidence="1">tRNA-uridine isomerase I</fullName>
    </alternativeName>
</protein>
<name>TRUA_NITHX</name>
<reference key="1">
    <citation type="submission" date="2006-03" db="EMBL/GenBank/DDBJ databases">
        <title>Complete sequence of chromosome of Nitrobacter hamburgensis X14.</title>
        <authorList>
            <consortium name="US DOE Joint Genome Institute"/>
            <person name="Copeland A."/>
            <person name="Lucas S."/>
            <person name="Lapidus A."/>
            <person name="Barry K."/>
            <person name="Detter J.C."/>
            <person name="Glavina del Rio T."/>
            <person name="Hammon N."/>
            <person name="Israni S."/>
            <person name="Dalin E."/>
            <person name="Tice H."/>
            <person name="Pitluck S."/>
            <person name="Chain P."/>
            <person name="Malfatti S."/>
            <person name="Shin M."/>
            <person name="Vergez L."/>
            <person name="Schmutz J."/>
            <person name="Larimer F."/>
            <person name="Land M."/>
            <person name="Hauser L."/>
            <person name="Kyrpides N."/>
            <person name="Ivanova N."/>
            <person name="Ward B."/>
            <person name="Arp D."/>
            <person name="Klotz M."/>
            <person name="Stein L."/>
            <person name="O'Mullan G."/>
            <person name="Starkenburg S."/>
            <person name="Sayavedra L."/>
            <person name="Poret-Peterson A.T."/>
            <person name="Gentry M.E."/>
            <person name="Bruce D."/>
            <person name="Richardson P."/>
        </authorList>
    </citation>
    <scope>NUCLEOTIDE SEQUENCE [LARGE SCALE GENOMIC DNA]</scope>
    <source>
        <strain>DSM 10229 / NCIMB 13809 / X14</strain>
    </source>
</reference>
<comment type="function">
    <text evidence="1">Formation of pseudouridine at positions 38, 39 and 40 in the anticodon stem and loop of transfer RNAs.</text>
</comment>
<comment type="catalytic activity">
    <reaction evidence="1">
        <text>uridine(38/39/40) in tRNA = pseudouridine(38/39/40) in tRNA</text>
        <dbReference type="Rhea" id="RHEA:22376"/>
        <dbReference type="Rhea" id="RHEA-COMP:10085"/>
        <dbReference type="Rhea" id="RHEA-COMP:10087"/>
        <dbReference type="ChEBI" id="CHEBI:65314"/>
        <dbReference type="ChEBI" id="CHEBI:65315"/>
        <dbReference type="EC" id="5.4.99.12"/>
    </reaction>
</comment>
<comment type="subunit">
    <text evidence="1">Homodimer.</text>
</comment>
<comment type="similarity">
    <text evidence="1">Belongs to the tRNA pseudouridine synthase TruA family.</text>
</comment>
<proteinExistence type="inferred from homology"/>
<feature type="chain" id="PRO_1000017123" description="tRNA pseudouridine synthase A">
    <location>
        <begin position="1"/>
        <end position="245"/>
    </location>
</feature>
<feature type="active site" description="Nucleophile" evidence="1">
    <location>
        <position position="52"/>
    </location>
</feature>
<feature type="binding site" evidence="1">
    <location>
        <position position="111"/>
    </location>
    <ligand>
        <name>substrate</name>
    </ligand>
</feature>
<keyword id="KW-0413">Isomerase</keyword>
<keyword id="KW-1185">Reference proteome</keyword>
<keyword id="KW-0819">tRNA processing</keyword>
<gene>
    <name evidence="1" type="primary">truA</name>
    <name type="ordered locus">Nham_3695</name>
</gene>
<accession>Q1QH76</accession>
<sequence length="245" mass="27061">MPRYKLTIEYDGGPFCGWQYQDNGPSVQGALEAAVKAICGDAVRVHGAGRTDAGVHALAQVAHCDIAKHFAPNRLRDGLNAHLRPHPIGVLTAEIVPDTFEARFSALRRHYVYRIANRRANLAIDVGHVWRVPRPLDTLAMHAAAQRLIGKHDFTTFRDTECQAKSPEKTLDQLDVVRNGDTVTIVTSARSFLHSQVRSMVGSLVWVGHGRWSADDLSNALAERRREACGPVAPPDGLYLVRVDY</sequence>
<organism>
    <name type="scientific">Nitrobacter hamburgensis (strain DSM 10229 / NCIMB 13809 / X14)</name>
    <dbReference type="NCBI Taxonomy" id="323097"/>
    <lineage>
        <taxon>Bacteria</taxon>
        <taxon>Pseudomonadati</taxon>
        <taxon>Pseudomonadota</taxon>
        <taxon>Alphaproteobacteria</taxon>
        <taxon>Hyphomicrobiales</taxon>
        <taxon>Nitrobacteraceae</taxon>
        <taxon>Nitrobacter</taxon>
    </lineage>
</organism>